<organism>
    <name type="scientific">Rhodococcus sp</name>
    <dbReference type="NCBI Taxonomy" id="1831"/>
    <lineage>
        <taxon>Bacteria</taxon>
        <taxon>Bacillati</taxon>
        <taxon>Actinomycetota</taxon>
        <taxon>Actinomycetes</taxon>
        <taxon>Mycobacteriales</taxon>
        <taxon>Nocardiaceae</taxon>
        <taxon>Rhodococcus</taxon>
    </lineage>
</organism>
<sequence length="293" mass="33246">MSEIGTGFPFDPHYVEVLGERMHYVDVGPRDGTPVLFLHGNPTSSYLWRNIIPHVAPSHRCIAPDLIGMGKSDKPDLDYFFDDHVRYLDAFIEALGLEEVVLVIHDWGSALGFHWAKRNPERVKGIACMEFIRPIPTWDEWPEFARETFQAFRTADVGRELIIDQNAFIEGALPKCVVRPLTEVEMDHYREPFLKPVDREPLWRFPNELPIAGEPANIVALVEAYMNWLHQSPVPKLLFWGTPGVLIPPAEAARLAESLPNCKTVDIGPGLHYLQEDNPDLIGSEIARWLPAL</sequence>
<keyword id="KW-0002">3D-structure</keyword>
<keyword id="KW-0216">Detoxification</keyword>
<keyword id="KW-0378">Hydrolase</keyword>
<proteinExistence type="evidence at protein level"/>
<accession>P0A3G3</accession>
<accession>Q53042</accession>
<gene>
    <name type="primary">dhaA</name>
</gene>
<dbReference type="EC" id="3.8.1.5"/>
<dbReference type="PDB" id="3FWH">
    <property type="method" value="X-ray"/>
    <property type="resolution" value="1.22 A"/>
    <property type="chains" value="A=1-293"/>
</dbReference>
<dbReference type="PDB" id="3G9X">
    <property type="method" value="X-ray"/>
    <property type="resolution" value="0.95 A"/>
    <property type="chains" value="A=1-293"/>
</dbReference>
<dbReference type="PDB" id="4HZG">
    <property type="method" value="X-ray"/>
    <property type="resolution" value="1.95 A"/>
    <property type="chains" value="A=1-293"/>
</dbReference>
<dbReference type="PDB" id="4KAA">
    <property type="method" value="X-ray"/>
    <property type="resolution" value="2.28 A"/>
    <property type="chains" value="A/B=2-291"/>
</dbReference>
<dbReference type="PDB" id="4KAC">
    <property type="method" value="X-ray"/>
    <property type="resolution" value="2.22 A"/>
    <property type="chains" value="A/B=2-291"/>
</dbReference>
<dbReference type="PDB" id="4KAF">
    <property type="method" value="X-ray"/>
    <property type="resolution" value="1.50 A"/>
    <property type="chains" value="A/B=3-293"/>
</dbReference>
<dbReference type="PDB" id="4KAJ">
    <property type="method" value="X-ray"/>
    <property type="resolution" value="1.95 A"/>
    <property type="chains" value="A=3-293"/>
</dbReference>
<dbReference type="PDB" id="5Y2X">
    <property type="method" value="X-ray"/>
    <property type="resolution" value="2.02 A"/>
    <property type="chains" value="A=2-293"/>
</dbReference>
<dbReference type="PDB" id="5Y2Y">
    <property type="method" value="X-ray"/>
    <property type="resolution" value="2.27 A"/>
    <property type="chains" value="A/B=2-293"/>
</dbReference>
<dbReference type="PDB" id="6Y7A">
    <property type="method" value="X-ray"/>
    <property type="resolution" value="1.40 A"/>
    <property type="chains" value="A=4-293"/>
</dbReference>
<dbReference type="PDB" id="6Y7B">
    <property type="method" value="X-ray"/>
    <property type="resolution" value="3.10 A"/>
    <property type="chains" value="A/B/C/D/E=4-293"/>
</dbReference>
<dbReference type="PDB" id="6ZCC">
    <property type="method" value="X-ray"/>
    <property type="resolution" value="1.52 A"/>
    <property type="chains" value="A=4-293"/>
</dbReference>
<dbReference type="PDB" id="6ZVU">
    <property type="method" value="X-ray"/>
    <property type="resolution" value="1.40 A"/>
    <property type="chains" value="A=4-293"/>
</dbReference>
<dbReference type="PDB" id="6ZVV">
    <property type="method" value="X-ray"/>
    <property type="resolution" value="1.40 A"/>
    <property type="chains" value="A/B/C/D=4-293"/>
</dbReference>
<dbReference type="PDB" id="6ZVW">
    <property type="method" value="X-ray"/>
    <property type="resolution" value="1.60 A"/>
    <property type="chains" value="A/B=4-293"/>
</dbReference>
<dbReference type="PDB" id="6ZVX">
    <property type="method" value="X-ray"/>
    <property type="resolution" value="1.40 A"/>
    <property type="chains" value="A=4-293"/>
</dbReference>
<dbReference type="PDB" id="6ZVY">
    <property type="method" value="X-ray"/>
    <property type="resolution" value="1.40 A"/>
    <property type="chains" value="A/B=4-293"/>
</dbReference>
<dbReference type="PDB" id="7PCW">
    <property type="method" value="X-ray"/>
    <property type="resolution" value="2.30 A"/>
    <property type="chains" value="A/B/C/D=4-293"/>
</dbReference>
<dbReference type="PDB" id="7PCX">
    <property type="method" value="X-ray"/>
    <property type="resolution" value="1.40 A"/>
    <property type="chains" value="A/B/C/D/E/F=4-293"/>
</dbReference>
<dbReference type="PDB" id="7WAM">
    <property type="method" value="X-ray"/>
    <property type="resolution" value="1.49 A"/>
    <property type="chains" value="A=2-293"/>
</dbReference>
<dbReference type="PDB" id="7WAN">
    <property type="method" value="X-ray"/>
    <property type="resolution" value="2.28 A"/>
    <property type="chains" value="A=2-293"/>
</dbReference>
<dbReference type="PDB" id="7ZBA">
    <property type="method" value="X-ray"/>
    <property type="resolution" value="1.23 A"/>
    <property type="chains" value="A/B=1-290"/>
</dbReference>
<dbReference type="PDB" id="7ZBB">
    <property type="method" value="X-ray"/>
    <property type="resolution" value="1.95 A"/>
    <property type="chains" value="A/B=1-290"/>
</dbReference>
<dbReference type="PDB" id="7ZBD">
    <property type="method" value="X-ray"/>
    <property type="resolution" value="1.68 A"/>
    <property type="chains" value="A/B=1-290"/>
</dbReference>
<dbReference type="PDB" id="7ZIV">
    <property type="method" value="X-ray"/>
    <property type="resolution" value="1.40 A"/>
    <property type="chains" value="A=4-293"/>
</dbReference>
<dbReference type="PDB" id="7ZIW">
    <property type="method" value="X-ray"/>
    <property type="resolution" value="1.99 A"/>
    <property type="chains" value="A/B=4-293"/>
</dbReference>
<dbReference type="PDB" id="7ZIX">
    <property type="method" value="X-ray"/>
    <property type="resolution" value="2.39 A"/>
    <property type="chains" value="A/B=4-293"/>
</dbReference>
<dbReference type="PDB" id="7ZIY">
    <property type="method" value="X-ray"/>
    <property type="resolution" value="1.70 A"/>
    <property type="chains" value="A/B=4-293"/>
</dbReference>
<dbReference type="PDB" id="7ZIZ">
    <property type="method" value="X-ray"/>
    <property type="resolution" value="1.50 A"/>
    <property type="chains" value="A=4-293"/>
</dbReference>
<dbReference type="PDB" id="7ZJ0">
    <property type="method" value="X-ray"/>
    <property type="resolution" value="1.50 A"/>
    <property type="chains" value="A/B=4-293"/>
</dbReference>
<dbReference type="PDB" id="8B6N">
    <property type="method" value="X-ray"/>
    <property type="resolution" value="2.30 A"/>
    <property type="chains" value="A=4-141"/>
</dbReference>
<dbReference type="PDB" id="8B6O">
    <property type="method" value="X-ray"/>
    <property type="resolution" value="2.00 A"/>
    <property type="chains" value="A=4-141"/>
</dbReference>
<dbReference type="PDB" id="8B6P">
    <property type="method" value="X-ray"/>
    <property type="resolution" value="1.10 A"/>
    <property type="chains" value="A/B=4-154"/>
</dbReference>
<dbReference type="PDB" id="8B6R">
    <property type="method" value="X-ray"/>
    <property type="resolution" value="1.50 A"/>
    <property type="chains" value="A=4-293"/>
</dbReference>
<dbReference type="PDB" id="8B6S">
    <property type="method" value="X-ray"/>
    <property type="resolution" value="1.80 A"/>
    <property type="chains" value="A/B=4-293"/>
</dbReference>
<dbReference type="PDB" id="8B6T">
    <property type="method" value="X-ray"/>
    <property type="resolution" value="2.00 A"/>
    <property type="chains" value="A/B=4-293"/>
</dbReference>
<dbReference type="PDB" id="8SW8">
    <property type="method" value="X-ray"/>
    <property type="resolution" value="1.90 A"/>
    <property type="chains" value="AAA=3-293"/>
</dbReference>
<dbReference type="PDB" id="9JHA">
    <property type="method" value="X-ray"/>
    <property type="resolution" value="1.70 A"/>
    <property type="chains" value="A=4-293"/>
</dbReference>
<dbReference type="PDBsum" id="3FWH"/>
<dbReference type="PDBsum" id="3G9X"/>
<dbReference type="PDBsum" id="4HZG"/>
<dbReference type="PDBsum" id="4KAA"/>
<dbReference type="PDBsum" id="4KAC"/>
<dbReference type="PDBsum" id="4KAF"/>
<dbReference type="PDBsum" id="4KAJ"/>
<dbReference type="PDBsum" id="5Y2X"/>
<dbReference type="PDBsum" id="5Y2Y"/>
<dbReference type="PDBsum" id="6Y7A"/>
<dbReference type="PDBsum" id="6Y7B"/>
<dbReference type="PDBsum" id="6ZCC"/>
<dbReference type="PDBsum" id="6ZVU"/>
<dbReference type="PDBsum" id="6ZVV"/>
<dbReference type="PDBsum" id="6ZVW"/>
<dbReference type="PDBsum" id="6ZVX"/>
<dbReference type="PDBsum" id="6ZVY"/>
<dbReference type="PDBsum" id="7PCW"/>
<dbReference type="PDBsum" id="7PCX"/>
<dbReference type="PDBsum" id="7WAM"/>
<dbReference type="PDBsum" id="7WAN"/>
<dbReference type="PDBsum" id="7ZBA"/>
<dbReference type="PDBsum" id="7ZBB"/>
<dbReference type="PDBsum" id="7ZBD"/>
<dbReference type="PDBsum" id="7ZIV"/>
<dbReference type="PDBsum" id="7ZIW"/>
<dbReference type="PDBsum" id="7ZIX"/>
<dbReference type="PDBsum" id="7ZIY"/>
<dbReference type="PDBsum" id="7ZIZ"/>
<dbReference type="PDBsum" id="7ZJ0"/>
<dbReference type="PDBsum" id="8B6N"/>
<dbReference type="PDBsum" id="8B6O"/>
<dbReference type="PDBsum" id="8B6P"/>
<dbReference type="PDBsum" id="8B6R"/>
<dbReference type="PDBsum" id="8B6S"/>
<dbReference type="PDBsum" id="8B6T"/>
<dbReference type="PDBsum" id="8SW8"/>
<dbReference type="PDBsum" id="9JHA"/>
<dbReference type="SMR" id="P0A3G3"/>
<dbReference type="ESTHER" id="rhoso-halo1">
    <property type="family name" value="Haloalkane_dehalogenase-HLD2"/>
</dbReference>
<dbReference type="BRENDA" id="3.8.1.5">
    <property type="organism ID" value="5397"/>
</dbReference>
<dbReference type="UniPathway" id="UPA00007"/>
<dbReference type="EvolutionaryTrace" id="P0A3G3"/>
<dbReference type="GO" id="GO:0016020">
    <property type="term" value="C:membrane"/>
    <property type="evidence" value="ECO:0007669"/>
    <property type="project" value="TreeGrafter"/>
</dbReference>
<dbReference type="GO" id="GO:0018786">
    <property type="term" value="F:haloalkane dehalogenase activity"/>
    <property type="evidence" value="ECO:0007669"/>
    <property type="project" value="UniProtKB-UniRule"/>
</dbReference>
<dbReference type="GO" id="GO:0009636">
    <property type="term" value="P:response to toxic substance"/>
    <property type="evidence" value="ECO:0007669"/>
    <property type="project" value="UniProtKB-KW"/>
</dbReference>
<dbReference type="Gene3D" id="3.40.50.1820">
    <property type="entry name" value="alpha/beta hydrolase"/>
    <property type="match status" value="1"/>
</dbReference>
<dbReference type="HAMAP" id="MF_01231">
    <property type="entry name" value="Haloalk_dehal_type2"/>
    <property type="match status" value="1"/>
</dbReference>
<dbReference type="InterPro" id="IPR000073">
    <property type="entry name" value="AB_hydrolase_1"/>
</dbReference>
<dbReference type="InterPro" id="IPR029058">
    <property type="entry name" value="AB_hydrolase_fold"/>
</dbReference>
<dbReference type="InterPro" id="IPR050266">
    <property type="entry name" value="AB_hydrolase_sf"/>
</dbReference>
<dbReference type="InterPro" id="IPR000639">
    <property type="entry name" value="Epox_hydrolase-like"/>
</dbReference>
<dbReference type="InterPro" id="IPR023594">
    <property type="entry name" value="Haloalkane_dehalogenase_2"/>
</dbReference>
<dbReference type="NCBIfam" id="NF002938">
    <property type="entry name" value="PRK03592.1"/>
    <property type="match status" value="1"/>
</dbReference>
<dbReference type="PANTHER" id="PTHR43798:SF24">
    <property type="entry name" value="CIS-3-ALKYL-4-ALKYLOXETAN-2-ONE DECARBOXYLASE"/>
    <property type="match status" value="1"/>
</dbReference>
<dbReference type="PANTHER" id="PTHR43798">
    <property type="entry name" value="MONOACYLGLYCEROL LIPASE"/>
    <property type="match status" value="1"/>
</dbReference>
<dbReference type="Pfam" id="PF00561">
    <property type="entry name" value="Abhydrolase_1"/>
    <property type="match status" value="1"/>
</dbReference>
<dbReference type="PRINTS" id="PR00412">
    <property type="entry name" value="EPOXHYDRLASE"/>
</dbReference>
<dbReference type="SUPFAM" id="SSF53474">
    <property type="entry name" value="alpha/beta-Hydrolases"/>
    <property type="match status" value="1"/>
</dbReference>
<protein>
    <recommendedName>
        <fullName>Haloalkane dehalogenase</fullName>
        <ecNumber>3.8.1.5</ecNumber>
    </recommendedName>
</protein>
<comment type="function">
    <text>Catalyzes hydrolytic cleavage of carbon-halogen bonds in halogenated aliphatic compounds, leading to the formation of the corresponding primary alcohols, halide ions and protons.</text>
</comment>
<comment type="catalytic activity">
    <reaction>
        <text>1-haloalkane + H2O = a halide anion + a primary alcohol + H(+)</text>
        <dbReference type="Rhea" id="RHEA:19081"/>
        <dbReference type="ChEBI" id="CHEBI:15377"/>
        <dbReference type="ChEBI" id="CHEBI:15378"/>
        <dbReference type="ChEBI" id="CHEBI:15734"/>
        <dbReference type="ChEBI" id="CHEBI:16042"/>
        <dbReference type="ChEBI" id="CHEBI:18060"/>
        <dbReference type="EC" id="3.8.1.5"/>
    </reaction>
</comment>
<comment type="pathway">
    <text>Xenobiotic degradation; haloalkane degradation.</text>
</comment>
<comment type="subunit">
    <text evidence="1">Monomer.</text>
</comment>
<comment type="biotechnology">
    <text>The recombinant strain obtained by expression of the Tyr-176/Phe-273 mutant in the 2,3-dichloro-1-propanol-utilizing bacterium Agrobacterium radiobacter AD1 is able to utilize the environmental pollutant 1,2,3-trichloropropane (TCP) as the sole carbon and energy source.</text>
</comment>
<comment type="similarity">
    <text evidence="4">Belongs to the haloalkane dehalogenase family. Type 2 subfamily.</text>
</comment>
<reference key="1">
    <citation type="journal article" date="2002" name="Appl. Environ. Microbiol.">
        <title>Biodegradation of 1,2,3-trichloropropane through directed evolution and heterologous expression of a haloalkane dehalogenase gene.</title>
        <authorList>
            <person name="Bosma T."/>
            <person name="Damborsky J."/>
            <person name="Stucki G."/>
            <person name="Janssen D.B."/>
        </authorList>
    </citation>
    <scope>NUCLEOTIDE SEQUENCE [GENOMIC DNA]</scope>
    <scope>MUTAGENESIS OF CYS-176 AND TYR-273</scope>
    <source>
        <strain>m15-3</strain>
    </source>
</reference>
<feature type="chain" id="PRO_0000216776" description="Haloalkane dehalogenase">
    <location>
        <begin position="1"/>
        <end position="293"/>
    </location>
</feature>
<feature type="domain" description="AB hydrolase-1" evidence="2">
    <location>
        <begin position="34"/>
        <end position="158"/>
    </location>
</feature>
<feature type="active site" description="Nucleophile" evidence="1">
    <location>
        <position position="106"/>
    </location>
</feature>
<feature type="active site" description="Proton donor" evidence="1">
    <location>
        <position position="130"/>
    </location>
</feature>
<feature type="active site" description="Proton acceptor" evidence="1">
    <location>
        <position position="272"/>
    </location>
</feature>
<feature type="mutagenesis site" description="3-fold increase in catalytic efficiency for TCP dehalogenation. 8-fold increase in catalytic efficiency for TCP dehalogenation; when associated with F-273." evidence="3">
    <original>C</original>
    <variation>Y</variation>
    <location>
        <position position="176"/>
    </location>
</feature>
<feature type="mutagenesis site" description="8-fold increase in catalytic efficiency for TCP dehalogenation; when associated with Y-176." evidence="3">
    <original>Y</original>
    <variation>F</variation>
    <location>
        <position position="273"/>
    </location>
</feature>
<feature type="strand" evidence="5">
    <location>
        <begin position="13"/>
        <end position="17"/>
    </location>
</feature>
<feature type="strand" evidence="5">
    <location>
        <begin position="20"/>
        <end position="28"/>
    </location>
</feature>
<feature type="strand" evidence="5">
    <location>
        <begin position="30"/>
        <end position="32"/>
    </location>
</feature>
<feature type="strand" evidence="5">
    <location>
        <begin position="35"/>
        <end position="38"/>
    </location>
</feature>
<feature type="helix" evidence="5">
    <location>
        <begin position="45"/>
        <end position="48"/>
    </location>
</feature>
<feature type="turn" evidence="5">
    <location>
        <begin position="49"/>
        <end position="51"/>
    </location>
</feature>
<feature type="helix" evidence="5">
    <location>
        <begin position="52"/>
        <end position="55"/>
    </location>
</feature>
<feature type="turn" evidence="5">
    <location>
        <begin position="56"/>
        <end position="58"/>
    </location>
</feature>
<feature type="strand" evidence="5">
    <location>
        <begin position="61"/>
        <end position="64"/>
    </location>
</feature>
<feature type="helix" evidence="5">
    <location>
        <begin position="81"/>
        <end position="94"/>
    </location>
</feature>
<feature type="strand" evidence="5">
    <location>
        <begin position="99"/>
        <end position="105"/>
    </location>
</feature>
<feature type="helix" evidence="5">
    <location>
        <begin position="106"/>
        <end position="118"/>
    </location>
</feature>
<feature type="helix" evidence="5">
    <location>
        <begin position="120"/>
        <end position="122"/>
    </location>
</feature>
<feature type="strand" evidence="5">
    <location>
        <begin position="123"/>
        <end position="130"/>
    </location>
</feature>
<feature type="strand" evidence="5">
    <location>
        <begin position="135"/>
        <end position="137"/>
    </location>
</feature>
<feature type="helix" evidence="5">
    <location>
        <begin position="138"/>
        <end position="140"/>
    </location>
</feature>
<feature type="helix" evidence="5">
    <location>
        <begin position="143"/>
        <end position="145"/>
    </location>
</feature>
<feature type="helix" evidence="5">
    <location>
        <begin position="146"/>
        <end position="152"/>
    </location>
</feature>
<feature type="strand" evidence="5">
    <location>
        <begin position="154"/>
        <end position="156"/>
    </location>
</feature>
<feature type="helix" evidence="5">
    <location>
        <begin position="157"/>
        <end position="162"/>
    </location>
</feature>
<feature type="helix" evidence="5">
    <location>
        <begin position="167"/>
        <end position="170"/>
    </location>
</feature>
<feature type="helix" evidence="5">
    <location>
        <begin position="172"/>
        <end position="175"/>
    </location>
</feature>
<feature type="helix" evidence="6">
    <location>
        <begin position="176"/>
        <end position="178"/>
    </location>
</feature>
<feature type="helix" evidence="5">
    <location>
        <begin position="183"/>
        <end position="190"/>
    </location>
</feature>
<feature type="helix" evidence="5">
    <location>
        <begin position="191"/>
        <end position="193"/>
    </location>
</feature>
<feature type="helix" evidence="5">
    <location>
        <begin position="196"/>
        <end position="199"/>
    </location>
</feature>
<feature type="helix" evidence="5">
    <location>
        <begin position="200"/>
        <end position="208"/>
    </location>
</feature>
<feature type="helix" evidence="5">
    <location>
        <begin position="216"/>
        <end position="231"/>
    </location>
</feature>
<feature type="strand" evidence="5">
    <location>
        <begin position="236"/>
        <end position="243"/>
    </location>
</feature>
<feature type="strand" evidence="5">
    <location>
        <begin position="245"/>
        <end position="247"/>
    </location>
</feature>
<feature type="helix" evidence="5">
    <location>
        <begin position="249"/>
        <end position="258"/>
    </location>
</feature>
<feature type="strand" evidence="5">
    <location>
        <begin position="262"/>
        <end position="272"/>
    </location>
</feature>
<feature type="helix" evidence="5">
    <location>
        <begin position="274"/>
        <end position="277"/>
    </location>
</feature>
<feature type="helix" evidence="5">
    <location>
        <begin position="279"/>
        <end position="289"/>
    </location>
</feature>
<feature type="helix" evidence="5">
    <location>
        <begin position="291"/>
        <end position="293"/>
    </location>
</feature>
<name>DHAA_RHOSO</name>
<evidence type="ECO:0000250" key="1"/>
<evidence type="ECO:0000255" key="2"/>
<evidence type="ECO:0000269" key="3">
    <source>
    </source>
</evidence>
<evidence type="ECO:0000305" key="4"/>
<evidence type="ECO:0007829" key="5">
    <source>
        <dbReference type="PDB" id="3G9X"/>
    </source>
</evidence>
<evidence type="ECO:0007829" key="6">
    <source>
        <dbReference type="PDB" id="8B6S"/>
    </source>
</evidence>